<sequence length="164" mass="18220">MLHEPRFWSAVAFVLFFVLFGKKLWTPLAAALDSRADRIRADLDEAARLRREAEQMLEDATRERETAMVEARALVEHSLIEAARIADEARREAEAVATRREQMARDRIAASERSAVREVRQVAIDVAIQATRDVLATALPAGADHAIVDRAIADLPSALSHRAA</sequence>
<comment type="function">
    <text evidence="1">F(1)F(0) ATP synthase produces ATP from ADP in the presence of a proton or sodium gradient. F-type ATPases consist of two structural domains, F(1) containing the extramembraneous catalytic core and F(0) containing the membrane proton channel, linked together by a central stalk and a peripheral stalk. During catalysis, ATP synthesis in the catalytic domain of F(1) is coupled via a rotary mechanism of the central stalk subunits to proton translocation.</text>
</comment>
<comment type="function">
    <text evidence="1">Component of the F(0) channel, it forms part of the peripheral stalk, linking F(1) to F(0).</text>
</comment>
<comment type="subunit">
    <text evidence="1">F-type ATPases have 2 components, F(1) - the catalytic core - and F(0) - the membrane proton channel. F(1) has five subunits: alpha(3), beta(3), gamma(1), delta(1), epsilon(1). F(0) has three main subunits: a(1), b(2) and c(10-14). The alpha and beta chains form an alternating ring which encloses part of the gamma chain. F(1) is attached to F(0) by a central stalk formed by the gamma and epsilon chains, while a peripheral stalk is formed by the delta and b chains.</text>
</comment>
<comment type="subcellular location">
    <subcellularLocation>
        <location evidence="1">Cell inner membrane</location>
        <topology evidence="1">Single-pass membrane protein</topology>
    </subcellularLocation>
</comment>
<comment type="similarity">
    <text evidence="1">Belongs to the ATPase B chain family.</text>
</comment>
<accession>A9HDM4</accession>
<keyword id="KW-0066">ATP synthesis</keyword>
<keyword id="KW-0997">Cell inner membrane</keyword>
<keyword id="KW-1003">Cell membrane</keyword>
<keyword id="KW-0138">CF(0)</keyword>
<keyword id="KW-0375">Hydrogen ion transport</keyword>
<keyword id="KW-0406">Ion transport</keyword>
<keyword id="KW-0472">Membrane</keyword>
<keyword id="KW-1185">Reference proteome</keyword>
<keyword id="KW-0812">Transmembrane</keyword>
<keyword id="KW-1133">Transmembrane helix</keyword>
<keyword id="KW-0813">Transport</keyword>
<protein>
    <recommendedName>
        <fullName evidence="1">ATP synthase subunit b</fullName>
    </recommendedName>
    <alternativeName>
        <fullName evidence="1">ATP synthase F(0) sector subunit b</fullName>
    </alternativeName>
    <alternativeName>
        <fullName evidence="1">ATPase subunit I</fullName>
    </alternativeName>
    <alternativeName>
        <fullName evidence="1">F-type ATPase subunit b</fullName>
        <shortName evidence="1">F-ATPase subunit b</shortName>
    </alternativeName>
</protein>
<name>ATPF_GLUDA</name>
<reference key="1">
    <citation type="journal article" date="2009" name="BMC Genomics">
        <title>Complete genome sequence of the sugarcane nitrogen-fixing endophyte Gluconacetobacter diazotrophicus Pal5.</title>
        <authorList>
            <person name="Bertalan M."/>
            <person name="Albano R."/>
            <person name="de Padua V."/>
            <person name="Rouws L."/>
            <person name="Rojas C."/>
            <person name="Hemerly A."/>
            <person name="Teixeira K."/>
            <person name="Schwab S."/>
            <person name="Araujo J."/>
            <person name="Oliveira A."/>
            <person name="Franca L."/>
            <person name="Magalhaes V."/>
            <person name="Alqueres S."/>
            <person name="Cardoso A."/>
            <person name="Almeida W."/>
            <person name="Loureiro M.M."/>
            <person name="Nogueira E."/>
            <person name="Cidade D."/>
            <person name="Oliveira D."/>
            <person name="Simao T."/>
            <person name="Macedo J."/>
            <person name="Valadao A."/>
            <person name="Dreschsel M."/>
            <person name="Freitas F."/>
            <person name="Vidal M."/>
            <person name="Guedes H."/>
            <person name="Rodrigues E."/>
            <person name="Meneses C."/>
            <person name="Brioso P."/>
            <person name="Pozzer L."/>
            <person name="Figueiredo D."/>
            <person name="Montano H."/>
            <person name="Junior J."/>
            <person name="de Souza Filho G."/>
            <person name="Martin Quintana Flores V."/>
            <person name="Ferreira B."/>
            <person name="Branco A."/>
            <person name="Gonzalez P."/>
            <person name="Guillobel H."/>
            <person name="Lemos M."/>
            <person name="Seibel L."/>
            <person name="Macedo J."/>
            <person name="Alves-Ferreira M."/>
            <person name="Sachetto-Martins G."/>
            <person name="Coelho A."/>
            <person name="Santos E."/>
            <person name="Amaral G."/>
            <person name="Neves A."/>
            <person name="Pacheco A.B."/>
            <person name="Carvalho D."/>
            <person name="Lery L."/>
            <person name="Bisch P."/>
            <person name="Rossle S.C."/>
            <person name="Urmenyi T."/>
            <person name="Rael Pereira A."/>
            <person name="Silva R."/>
            <person name="Rondinelli E."/>
            <person name="von Kruger W."/>
            <person name="Martins O."/>
            <person name="Baldani J.I."/>
            <person name="Ferreira P.C."/>
        </authorList>
    </citation>
    <scope>NUCLEOTIDE SEQUENCE [LARGE SCALE GENOMIC DNA]</scope>
    <source>
        <strain>ATCC 49037 / DSM 5601 / CCUG 37298 / CIP 103539 / LMG 7603 / PAl5</strain>
    </source>
</reference>
<reference key="2">
    <citation type="journal article" date="2010" name="Stand. Genomic Sci.">
        <title>Two genome sequences of the same bacterial strain, Gluconacetobacter diazotrophicus PAl 5, suggest a new standard in genome sequence submission.</title>
        <authorList>
            <person name="Giongo A."/>
            <person name="Tyler H.L."/>
            <person name="Zipperer U.N."/>
            <person name="Triplett E.W."/>
        </authorList>
    </citation>
    <scope>NUCLEOTIDE SEQUENCE [LARGE SCALE GENOMIC DNA]</scope>
    <source>
        <strain>ATCC 49037 / DSM 5601 / CCUG 37298 / CIP 103539 / LMG 7603 / PAl5</strain>
    </source>
</reference>
<gene>
    <name evidence="1" type="primary">atpF</name>
    <name type="ordered locus">GDI1177</name>
    <name type="ordered locus">Gdia_1890</name>
</gene>
<organism>
    <name type="scientific">Gluconacetobacter diazotrophicus (strain ATCC 49037 / DSM 5601 / CCUG 37298 / CIP 103539 / LMG 7603 / PAl5)</name>
    <dbReference type="NCBI Taxonomy" id="272568"/>
    <lineage>
        <taxon>Bacteria</taxon>
        <taxon>Pseudomonadati</taxon>
        <taxon>Pseudomonadota</taxon>
        <taxon>Alphaproteobacteria</taxon>
        <taxon>Acetobacterales</taxon>
        <taxon>Acetobacteraceae</taxon>
        <taxon>Gluconacetobacter</taxon>
    </lineage>
</organism>
<feature type="chain" id="PRO_0000368505" description="ATP synthase subunit b">
    <location>
        <begin position="1"/>
        <end position="164"/>
    </location>
</feature>
<feature type="transmembrane region" description="Helical" evidence="1">
    <location>
        <begin position="10"/>
        <end position="32"/>
    </location>
</feature>
<dbReference type="EMBL" id="CP001189">
    <property type="protein sequence ID" value="ACI51650.1"/>
    <property type="molecule type" value="Genomic_DNA"/>
</dbReference>
<dbReference type="EMBL" id="AM889285">
    <property type="protein sequence ID" value="CAP55120.1"/>
    <property type="molecule type" value="Genomic_DNA"/>
</dbReference>
<dbReference type="RefSeq" id="WP_012224279.1">
    <property type="nucleotide sequence ID" value="NC_010125.1"/>
</dbReference>
<dbReference type="SMR" id="A9HDM4"/>
<dbReference type="STRING" id="272568.GDI1177"/>
<dbReference type="KEGG" id="gdi:GDI1177"/>
<dbReference type="KEGG" id="gdj:Gdia_1890"/>
<dbReference type="eggNOG" id="COG0711">
    <property type="taxonomic scope" value="Bacteria"/>
</dbReference>
<dbReference type="HOGENOM" id="CLU_079215_6_2_5"/>
<dbReference type="OrthoDB" id="7283197at2"/>
<dbReference type="Proteomes" id="UP000001176">
    <property type="component" value="Chromosome"/>
</dbReference>
<dbReference type="GO" id="GO:0005886">
    <property type="term" value="C:plasma membrane"/>
    <property type="evidence" value="ECO:0007669"/>
    <property type="project" value="UniProtKB-SubCell"/>
</dbReference>
<dbReference type="GO" id="GO:0045259">
    <property type="term" value="C:proton-transporting ATP synthase complex"/>
    <property type="evidence" value="ECO:0007669"/>
    <property type="project" value="UniProtKB-KW"/>
</dbReference>
<dbReference type="GO" id="GO:0046933">
    <property type="term" value="F:proton-transporting ATP synthase activity, rotational mechanism"/>
    <property type="evidence" value="ECO:0007669"/>
    <property type="project" value="UniProtKB-UniRule"/>
</dbReference>
<dbReference type="GO" id="GO:0046961">
    <property type="term" value="F:proton-transporting ATPase activity, rotational mechanism"/>
    <property type="evidence" value="ECO:0007669"/>
    <property type="project" value="TreeGrafter"/>
</dbReference>
<dbReference type="CDD" id="cd06503">
    <property type="entry name" value="ATP-synt_Fo_b"/>
    <property type="match status" value="1"/>
</dbReference>
<dbReference type="HAMAP" id="MF_01398">
    <property type="entry name" value="ATP_synth_b_bprime"/>
    <property type="match status" value="1"/>
</dbReference>
<dbReference type="InterPro" id="IPR002146">
    <property type="entry name" value="ATP_synth_b/b'su_bac/chlpt"/>
</dbReference>
<dbReference type="InterPro" id="IPR050059">
    <property type="entry name" value="ATP_synthase_B_chain"/>
</dbReference>
<dbReference type="PANTHER" id="PTHR33445:SF1">
    <property type="entry name" value="ATP SYNTHASE SUBUNIT B"/>
    <property type="match status" value="1"/>
</dbReference>
<dbReference type="PANTHER" id="PTHR33445">
    <property type="entry name" value="ATP SYNTHASE SUBUNIT B', CHLOROPLASTIC"/>
    <property type="match status" value="1"/>
</dbReference>
<dbReference type="Pfam" id="PF00430">
    <property type="entry name" value="ATP-synt_B"/>
    <property type="match status" value="1"/>
</dbReference>
<evidence type="ECO:0000255" key="1">
    <source>
        <dbReference type="HAMAP-Rule" id="MF_01398"/>
    </source>
</evidence>
<proteinExistence type="inferred from homology"/>